<evidence type="ECO:0000250" key="1"/>
<evidence type="ECO:0000255" key="2">
    <source>
        <dbReference type="PROSITE-ProRule" id="PRU10001"/>
    </source>
</evidence>
<evidence type="ECO:0000305" key="3"/>
<proteinExistence type="inferred from homology"/>
<accession>P38004</accession>
<accession>O84240</accession>
<protein>
    <recommendedName>
        <fullName>3-oxoacyl-[acyl-carrier-protein] reductase FabG</fullName>
        <ecNumber>1.1.1.100</ecNumber>
    </recommendedName>
    <alternativeName>
        <fullName>3-ketoacyl-acyl carrier protein reductase</fullName>
    </alternativeName>
    <alternativeName>
        <fullName>Beta-Ketoacyl-acyl carrier protein reductase</fullName>
    </alternativeName>
    <alternativeName>
        <fullName>Beta-ketoacyl-ACP reductase</fullName>
    </alternativeName>
</protein>
<feature type="chain" id="PRO_0000054671" description="3-oxoacyl-[acyl-carrier-protein] reductase FabG">
    <location>
        <begin position="1"/>
        <end position="248"/>
    </location>
</feature>
<feature type="active site" description="Proton acceptor" evidence="2">
    <location>
        <position position="157"/>
    </location>
</feature>
<feature type="binding site" evidence="1">
    <location>
        <begin position="14"/>
        <end position="17"/>
    </location>
    <ligand>
        <name>NADP(+)</name>
        <dbReference type="ChEBI" id="CHEBI:58349"/>
    </ligand>
</feature>
<feature type="binding site" evidence="1">
    <location>
        <begin position="65"/>
        <end position="66"/>
    </location>
    <ligand>
        <name>NADP(+)</name>
        <dbReference type="ChEBI" id="CHEBI:58349"/>
    </ligand>
</feature>
<feature type="binding site" evidence="1">
    <location>
        <position position="92"/>
    </location>
    <ligand>
        <name>NADP(+)</name>
        <dbReference type="ChEBI" id="CHEBI:58349"/>
    </ligand>
</feature>
<feature type="binding site" evidence="1">
    <location>
        <position position="144"/>
    </location>
    <ligand>
        <name>substrate</name>
    </ligand>
</feature>
<feature type="binding site" evidence="1">
    <location>
        <begin position="157"/>
        <end position="161"/>
    </location>
    <ligand>
        <name>NADP(+)</name>
        <dbReference type="ChEBI" id="CHEBI:58349"/>
    </ligand>
</feature>
<feature type="binding site" evidence="1">
    <location>
        <position position="190"/>
    </location>
    <ligand>
        <name>NADP(+)</name>
        <dbReference type="ChEBI" id="CHEBI:58349"/>
    </ligand>
</feature>
<feature type="sequence conflict" description="In Ref. 2; AAC67830." evidence="3" ref="2">
    <original>G</original>
    <variation>T</variation>
    <location>
        <position position="3"/>
    </location>
</feature>
<keyword id="KW-0275">Fatty acid biosynthesis</keyword>
<keyword id="KW-0276">Fatty acid metabolism</keyword>
<keyword id="KW-0444">Lipid biosynthesis</keyword>
<keyword id="KW-0443">Lipid metabolism</keyword>
<keyword id="KW-0521">NADP</keyword>
<keyword id="KW-0560">Oxidoreductase</keyword>
<keyword id="KW-1185">Reference proteome</keyword>
<organism>
    <name type="scientific">Chlamydia trachomatis serovar D (strain ATCC VR-885 / DSM 19411 / UW-3/Cx)</name>
    <dbReference type="NCBI Taxonomy" id="272561"/>
    <lineage>
        <taxon>Bacteria</taxon>
        <taxon>Pseudomonadati</taxon>
        <taxon>Chlamydiota</taxon>
        <taxon>Chlamydiia</taxon>
        <taxon>Chlamydiales</taxon>
        <taxon>Chlamydiaceae</taxon>
        <taxon>Chlamydia/Chlamydophila group</taxon>
        <taxon>Chlamydia</taxon>
    </lineage>
</organism>
<sequence length="248" mass="26020">MSGLLVNKTAIVTGGSRGIGFSIAKLFAEQGANVQIWGINGEAGQAAAQTLSEQTGRQVSFALVDVSKNDMVSAQVQNFLAEYNTIDVIVNNAGITRDALLMRMSEEEWSSVINTNLGSIYNVCSAVIRPMIKARSGAIINISSIVGLRGSPGQTNYAAAKAGIIGFSKALSKEVGSKNIRVNCIAPGFIDTDMTKSLNDNLKNEWLKGVPLGRVGMPEEIAKAALFLASDGSSYITGQVLSVDGGMA</sequence>
<dbReference type="EC" id="1.1.1.100"/>
<dbReference type="EMBL" id="AE001273">
    <property type="protein sequence ID" value="AAC67830.1"/>
    <property type="molecule type" value="Genomic_DNA"/>
</dbReference>
<dbReference type="PIR" id="F71538">
    <property type="entry name" value="F71538"/>
</dbReference>
<dbReference type="RefSeq" id="NP_219742.1">
    <property type="nucleotide sequence ID" value="NC_000117.1"/>
</dbReference>
<dbReference type="RefSeq" id="WP_009871584.1">
    <property type="nucleotide sequence ID" value="NC_000117.1"/>
</dbReference>
<dbReference type="SMR" id="P38004"/>
<dbReference type="FunCoup" id="P38004">
    <property type="interactions" value="256"/>
</dbReference>
<dbReference type="STRING" id="272561.CT_237"/>
<dbReference type="EnsemblBacteria" id="AAC67830">
    <property type="protein sequence ID" value="AAC67830"/>
    <property type="gene ID" value="CT_237"/>
</dbReference>
<dbReference type="GeneID" id="884887"/>
<dbReference type="KEGG" id="ctr:CT_237"/>
<dbReference type="PATRIC" id="fig|272561.5.peg.254"/>
<dbReference type="HOGENOM" id="CLU_010194_1_3_0"/>
<dbReference type="InParanoid" id="P38004"/>
<dbReference type="OrthoDB" id="9803333at2"/>
<dbReference type="UniPathway" id="UPA00094"/>
<dbReference type="Proteomes" id="UP000000431">
    <property type="component" value="Chromosome"/>
</dbReference>
<dbReference type="GO" id="GO:0004316">
    <property type="term" value="F:3-oxoacyl-[acyl-carrier-protein] reductase (NADPH) activity"/>
    <property type="evidence" value="ECO:0000250"/>
    <property type="project" value="UniProtKB"/>
</dbReference>
<dbReference type="GO" id="GO:0051287">
    <property type="term" value="F:NAD binding"/>
    <property type="evidence" value="ECO:0007669"/>
    <property type="project" value="InterPro"/>
</dbReference>
<dbReference type="GO" id="GO:0050661">
    <property type="term" value="F:NADP binding"/>
    <property type="evidence" value="ECO:0000250"/>
    <property type="project" value="UniProtKB"/>
</dbReference>
<dbReference type="GO" id="GO:0030497">
    <property type="term" value="P:fatty acid elongation"/>
    <property type="evidence" value="ECO:0000250"/>
    <property type="project" value="UniProtKB"/>
</dbReference>
<dbReference type="CDD" id="cd05333">
    <property type="entry name" value="BKR_SDR_c"/>
    <property type="match status" value="1"/>
</dbReference>
<dbReference type="FunFam" id="3.40.50.720:FF:000115">
    <property type="entry name" value="3-oxoacyl-[acyl-carrier-protein] reductase FabG"/>
    <property type="match status" value="1"/>
</dbReference>
<dbReference type="Gene3D" id="3.40.50.720">
    <property type="entry name" value="NAD(P)-binding Rossmann-like Domain"/>
    <property type="match status" value="1"/>
</dbReference>
<dbReference type="InterPro" id="IPR011284">
    <property type="entry name" value="3oxo_ACP_reduc"/>
</dbReference>
<dbReference type="InterPro" id="IPR036291">
    <property type="entry name" value="NAD(P)-bd_dom_sf"/>
</dbReference>
<dbReference type="InterPro" id="IPR020904">
    <property type="entry name" value="Sc_DH/Rdtase_CS"/>
</dbReference>
<dbReference type="InterPro" id="IPR002347">
    <property type="entry name" value="SDR_fam"/>
</dbReference>
<dbReference type="NCBIfam" id="TIGR01830">
    <property type="entry name" value="3oxo_ACP_reduc"/>
    <property type="match status" value="1"/>
</dbReference>
<dbReference type="NCBIfam" id="NF004197">
    <property type="entry name" value="PRK05653.1-1"/>
    <property type="match status" value="1"/>
</dbReference>
<dbReference type="NCBIfam" id="NF005559">
    <property type="entry name" value="PRK07231.1"/>
    <property type="match status" value="1"/>
</dbReference>
<dbReference type="NCBIfam" id="NF009466">
    <property type="entry name" value="PRK12826.1-2"/>
    <property type="match status" value="1"/>
</dbReference>
<dbReference type="PANTHER" id="PTHR42760:SF133">
    <property type="entry name" value="3-OXOACYL-[ACYL-CARRIER-PROTEIN] REDUCTASE"/>
    <property type="match status" value="1"/>
</dbReference>
<dbReference type="PANTHER" id="PTHR42760">
    <property type="entry name" value="SHORT-CHAIN DEHYDROGENASES/REDUCTASES FAMILY MEMBER"/>
    <property type="match status" value="1"/>
</dbReference>
<dbReference type="Pfam" id="PF13561">
    <property type="entry name" value="adh_short_C2"/>
    <property type="match status" value="1"/>
</dbReference>
<dbReference type="PRINTS" id="PR00081">
    <property type="entry name" value="GDHRDH"/>
</dbReference>
<dbReference type="PRINTS" id="PR00080">
    <property type="entry name" value="SDRFAMILY"/>
</dbReference>
<dbReference type="SMART" id="SM00822">
    <property type="entry name" value="PKS_KR"/>
    <property type="match status" value="1"/>
</dbReference>
<dbReference type="SUPFAM" id="SSF51735">
    <property type="entry name" value="NAD(P)-binding Rossmann-fold domains"/>
    <property type="match status" value="1"/>
</dbReference>
<dbReference type="PROSITE" id="PS00061">
    <property type="entry name" value="ADH_SHORT"/>
    <property type="match status" value="1"/>
</dbReference>
<reference key="1">
    <citation type="journal article" date="1998" name="Science">
        <title>Genome sequence of an obligate intracellular pathogen of humans: Chlamydia trachomatis.</title>
        <authorList>
            <person name="Stephens R.S."/>
            <person name="Kalman S."/>
            <person name="Lammel C.J."/>
            <person name="Fan J."/>
            <person name="Marathe R."/>
            <person name="Aravind L."/>
            <person name="Mitchell W.P."/>
            <person name="Olinger L."/>
            <person name="Tatusov R.L."/>
            <person name="Zhao Q."/>
            <person name="Koonin E.V."/>
            <person name="Davis R.W."/>
        </authorList>
    </citation>
    <scope>NUCLEOTIDE SEQUENCE [LARGE SCALE GENOMIC DNA]</scope>
    <source>
        <strain>ATCC VR-885 / DSM 19411 / UW-3/Cx</strain>
    </source>
</reference>
<reference key="2">
    <citation type="submission" date="1994-09" db="UniProtKB">
        <authorList>
            <person name="Bini L."/>
            <person name="Santucci A."/>
            <person name="Magi B."/>
            <person name="Marzocchi B."/>
            <person name="Sanchez-Campillo M."/>
            <person name="Comanducci M."/>
            <person name="Christianen G."/>
            <person name="Birkelund S."/>
            <person name="Vtretou E."/>
            <person name="Ratti G."/>
            <person name="Pallini V."/>
        </authorList>
    </citation>
    <scope>NUCLEOTIDE SEQUENCE [GENOMIC DNA] OF 1-11</scope>
    <source>
        <strain>L2/434/Bu</strain>
    </source>
</reference>
<comment type="function">
    <text evidence="1">Catalyzes the NADPH-dependent reduction of beta-ketoacyl-ACP substrates to beta-hydroxyacyl-ACP products, the first reductive step in the elongation cycle of fatty acid biosynthesis.</text>
</comment>
<comment type="catalytic activity">
    <reaction>
        <text>a (3R)-hydroxyacyl-[ACP] + NADP(+) = a 3-oxoacyl-[ACP] + NADPH + H(+)</text>
        <dbReference type="Rhea" id="RHEA:17397"/>
        <dbReference type="Rhea" id="RHEA-COMP:9916"/>
        <dbReference type="Rhea" id="RHEA-COMP:9945"/>
        <dbReference type="ChEBI" id="CHEBI:15378"/>
        <dbReference type="ChEBI" id="CHEBI:57783"/>
        <dbReference type="ChEBI" id="CHEBI:58349"/>
        <dbReference type="ChEBI" id="CHEBI:78776"/>
        <dbReference type="ChEBI" id="CHEBI:78827"/>
        <dbReference type="EC" id="1.1.1.100"/>
    </reaction>
</comment>
<comment type="pathway">
    <text>Lipid metabolism; fatty acid biosynthesis.</text>
</comment>
<comment type="subunit">
    <text evidence="1">Homotetramer.</text>
</comment>
<comment type="similarity">
    <text evidence="3">Belongs to the short-chain dehydrogenases/reductases (SDR) family.</text>
</comment>
<name>FABG_CHLTR</name>
<gene>
    <name type="primary">fabG</name>
    <name type="ordered locus">CT_237</name>
</gene>